<comment type="function">
    <text evidence="1">Necessary for normal cell division and for the maintenance of normal septation.</text>
</comment>
<comment type="cofactor">
    <cofactor evidence="1">
        <name>Mg(2+)</name>
        <dbReference type="ChEBI" id="CHEBI:18420"/>
    </cofactor>
</comment>
<comment type="similarity">
    <text evidence="1">Belongs to the TRAFAC class TrmE-Era-EngA-EngB-Septin-like GTPase superfamily. EngB GTPase family.</text>
</comment>
<sequence length="198" mass="22354">MKVTKADIVISAVKPEQYPDSDLPEIALAGRSNVGKSSFINKILNRKKLVRISSKPGKTQTLNFFLINEMMHFVDVPGYGYAKVSKSERAAWGKMIETYFTTRKQLDAAVLVVDLRHQPTSDDVMMYDFLKHYEIPTIIIATKADKIPKGKWQKHLKVVKETLAVEIGDEIVLFSSETGLGKEEAWKAIHKMTKTKNA</sequence>
<organism>
    <name type="scientific">Bacillus cereus (strain G9842)</name>
    <dbReference type="NCBI Taxonomy" id="405531"/>
    <lineage>
        <taxon>Bacteria</taxon>
        <taxon>Bacillati</taxon>
        <taxon>Bacillota</taxon>
        <taxon>Bacilli</taxon>
        <taxon>Bacillales</taxon>
        <taxon>Bacillaceae</taxon>
        <taxon>Bacillus</taxon>
        <taxon>Bacillus cereus group</taxon>
    </lineage>
</organism>
<keyword id="KW-0131">Cell cycle</keyword>
<keyword id="KW-0132">Cell division</keyword>
<keyword id="KW-0342">GTP-binding</keyword>
<keyword id="KW-0460">Magnesium</keyword>
<keyword id="KW-0479">Metal-binding</keyword>
<keyword id="KW-0547">Nucleotide-binding</keyword>
<keyword id="KW-0717">Septation</keyword>
<evidence type="ECO:0000255" key="1">
    <source>
        <dbReference type="HAMAP-Rule" id="MF_00321"/>
    </source>
</evidence>
<accession>B7IIY0</accession>
<name>ENGB_BACC2</name>
<reference key="1">
    <citation type="submission" date="2008-10" db="EMBL/GenBank/DDBJ databases">
        <title>Genome sequence of Bacillus cereus G9842.</title>
        <authorList>
            <person name="Dodson R.J."/>
            <person name="Durkin A.S."/>
            <person name="Rosovitz M.J."/>
            <person name="Rasko D.A."/>
            <person name="Hoffmaster A."/>
            <person name="Ravel J."/>
            <person name="Sutton G."/>
        </authorList>
    </citation>
    <scope>NUCLEOTIDE SEQUENCE [LARGE SCALE GENOMIC DNA]</scope>
    <source>
        <strain>G9842</strain>
    </source>
</reference>
<dbReference type="EMBL" id="CP001186">
    <property type="protein sequence ID" value="ACK93796.1"/>
    <property type="molecule type" value="Genomic_DNA"/>
</dbReference>
<dbReference type="SMR" id="B7IIY0"/>
<dbReference type="KEGG" id="bcg:BCG9842_B0647"/>
<dbReference type="HOGENOM" id="CLU_033732_3_0_9"/>
<dbReference type="Proteomes" id="UP000006744">
    <property type="component" value="Chromosome"/>
</dbReference>
<dbReference type="GO" id="GO:0005829">
    <property type="term" value="C:cytosol"/>
    <property type="evidence" value="ECO:0007669"/>
    <property type="project" value="TreeGrafter"/>
</dbReference>
<dbReference type="GO" id="GO:0005525">
    <property type="term" value="F:GTP binding"/>
    <property type="evidence" value="ECO:0007669"/>
    <property type="project" value="UniProtKB-UniRule"/>
</dbReference>
<dbReference type="GO" id="GO:0046872">
    <property type="term" value="F:metal ion binding"/>
    <property type="evidence" value="ECO:0007669"/>
    <property type="project" value="UniProtKB-KW"/>
</dbReference>
<dbReference type="GO" id="GO:0000917">
    <property type="term" value="P:division septum assembly"/>
    <property type="evidence" value="ECO:0007669"/>
    <property type="project" value="UniProtKB-KW"/>
</dbReference>
<dbReference type="CDD" id="cd01876">
    <property type="entry name" value="YihA_EngB"/>
    <property type="match status" value="1"/>
</dbReference>
<dbReference type="FunFam" id="3.40.50.300:FF:000098">
    <property type="entry name" value="Probable GTP-binding protein EngB"/>
    <property type="match status" value="1"/>
</dbReference>
<dbReference type="Gene3D" id="3.40.50.300">
    <property type="entry name" value="P-loop containing nucleotide triphosphate hydrolases"/>
    <property type="match status" value="1"/>
</dbReference>
<dbReference type="HAMAP" id="MF_00321">
    <property type="entry name" value="GTPase_EngB"/>
    <property type="match status" value="1"/>
</dbReference>
<dbReference type="InterPro" id="IPR030393">
    <property type="entry name" value="G_ENGB_dom"/>
</dbReference>
<dbReference type="InterPro" id="IPR006073">
    <property type="entry name" value="GTP-bd"/>
</dbReference>
<dbReference type="InterPro" id="IPR019987">
    <property type="entry name" value="GTP-bd_ribosome_bio_YsxC"/>
</dbReference>
<dbReference type="InterPro" id="IPR027417">
    <property type="entry name" value="P-loop_NTPase"/>
</dbReference>
<dbReference type="NCBIfam" id="TIGR03598">
    <property type="entry name" value="GTPase_YsxC"/>
    <property type="match status" value="1"/>
</dbReference>
<dbReference type="PANTHER" id="PTHR11649:SF13">
    <property type="entry name" value="ENGB-TYPE G DOMAIN-CONTAINING PROTEIN"/>
    <property type="match status" value="1"/>
</dbReference>
<dbReference type="PANTHER" id="PTHR11649">
    <property type="entry name" value="MSS1/TRME-RELATED GTP-BINDING PROTEIN"/>
    <property type="match status" value="1"/>
</dbReference>
<dbReference type="Pfam" id="PF01926">
    <property type="entry name" value="MMR_HSR1"/>
    <property type="match status" value="1"/>
</dbReference>
<dbReference type="SUPFAM" id="SSF52540">
    <property type="entry name" value="P-loop containing nucleoside triphosphate hydrolases"/>
    <property type="match status" value="1"/>
</dbReference>
<dbReference type="PROSITE" id="PS51706">
    <property type="entry name" value="G_ENGB"/>
    <property type="match status" value="1"/>
</dbReference>
<proteinExistence type="inferred from homology"/>
<protein>
    <recommendedName>
        <fullName evidence="1">Probable GTP-binding protein EngB</fullName>
    </recommendedName>
</protein>
<feature type="chain" id="PRO_1000119590" description="Probable GTP-binding protein EngB">
    <location>
        <begin position="1"/>
        <end position="198"/>
    </location>
</feature>
<feature type="domain" description="EngB-type G" evidence="1">
    <location>
        <begin position="22"/>
        <end position="195"/>
    </location>
</feature>
<feature type="binding site" evidence="1">
    <location>
        <begin position="30"/>
        <end position="37"/>
    </location>
    <ligand>
        <name>GTP</name>
        <dbReference type="ChEBI" id="CHEBI:37565"/>
    </ligand>
</feature>
<feature type="binding site" evidence="1">
    <location>
        <position position="37"/>
    </location>
    <ligand>
        <name>Mg(2+)</name>
        <dbReference type="ChEBI" id="CHEBI:18420"/>
    </ligand>
</feature>
<feature type="binding site" evidence="1">
    <location>
        <begin position="57"/>
        <end position="61"/>
    </location>
    <ligand>
        <name>GTP</name>
        <dbReference type="ChEBI" id="CHEBI:37565"/>
    </ligand>
</feature>
<feature type="binding site" evidence="1">
    <location>
        <position position="59"/>
    </location>
    <ligand>
        <name>Mg(2+)</name>
        <dbReference type="ChEBI" id="CHEBI:18420"/>
    </ligand>
</feature>
<feature type="binding site" evidence="1">
    <location>
        <begin position="75"/>
        <end position="78"/>
    </location>
    <ligand>
        <name>GTP</name>
        <dbReference type="ChEBI" id="CHEBI:37565"/>
    </ligand>
</feature>
<feature type="binding site" evidence="1">
    <location>
        <begin position="142"/>
        <end position="145"/>
    </location>
    <ligand>
        <name>GTP</name>
        <dbReference type="ChEBI" id="CHEBI:37565"/>
    </ligand>
</feature>
<feature type="binding site" evidence="1">
    <location>
        <begin position="174"/>
        <end position="176"/>
    </location>
    <ligand>
        <name>GTP</name>
        <dbReference type="ChEBI" id="CHEBI:37565"/>
    </ligand>
</feature>
<gene>
    <name evidence="1" type="primary">engB</name>
    <name type="ordered locus">BCG9842_B0647</name>
</gene>